<keyword id="KW-1003">Cell membrane</keyword>
<keyword id="KW-0963">Cytoplasm</keyword>
<keyword id="KW-0342">GTP-binding</keyword>
<keyword id="KW-0472">Membrane</keyword>
<keyword id="KW-0547">Nucleotide-binding</keyword>
<keyword id="KW-0690">Ribosome biogenesis</keyword>
<keyword id="KW-0694">RNA-binding</keyword>
<keyword id="KW-0699">rRNA-binding</keyword>
<evidence type="ECO:0000255" key="1">
    <source>
        <dbReference type="HAMAP-Rule" id="MF_00367"/>
    </source>
</evidence>
<evidence type="ECO:0000255" key="2">
    <source>
        <dbReference type="PROSITE-ProRule" id="PRU01050"/>
    </source>
</evidence>
<organism>
    <name type="scientific">Staphylococcus aureus (strain Newman)</name>
    <dbReference type="NCBI Taxonomy" id="426430"/>
    <lineage>
        <taxon>Bacteria</taxon>
        <taxon>Bacillati</taxon>
        <taxon>Bacillota</taxon>
        <taxon>Bacilli</taxon>
        <taxon>Bacillales</taxon>
        <taxon>Staphylococcaceae</taxon>
        <taxon>Staphylococcus</taxon>
    </lineage>
</organism>
<accession>A6QHB0</accession>
<name>ERA_STAAE</name>
<gene>
    <name evidence="1" type="primary">era</name>
    <name type="ordered locus">NWMN_1470</name>
</gene>
<comment type="function">
    <text evidence="1">An essential GTPase that binds both GDP and GTP, with rapid nucleotide exchange. Plays a role in 16S rRNA processing and 30S ribosomal subunit biogenesis and possibly also in cell cycle regulation and energy metabolism.</text>
</comment>
<comment type="subunit">
    <text evidence="1">Monomer.</text>
</comment>
<comment type="subcellular location">
    <subcellularLocation>
        <location>Cytoplasm</location>
    </subcellularLocation>
    <subcellularLocation>
        <location evidence="1">Cell membrane</location>
        <topology evidence="1">Peripheral membrane protein</topology>
    </subcellularLocation>
</comment>
<comment type="similarity">
    <text evidence="1 2">Belongs to the TRAFAC class TrmE-Era-EngA-EngB-Septin-like GTPase superfamily. Era GTPase family.</text>
</comment>
<feature type="chain" id="PRO_1000079745" description="GTPase Era">
    <location>
        <begin position="1"/>
        <end position="299"/>
    </location>
</feature>
<feature type="domain" description="Era-type G" evidence="2">
    <location>
        <begin position="5"/>
        <end position="172"/>
    </location>
</feature>
<feature type="domain" description="KH type-2" evidence="1">
    <location>
        <begin position="203"/>
        <end position="280"/>
    </location>
</feature>
<feature type="region of interest" description="G1" evidence="2">
    <location>
        <begin position="13"/>
        <end position="20"/>
    </location>
</feature>
<feature type="region of interest" description="G2" evidence="2">
    <location>
        <begin position="39"/>
        <end position="43"/>
    </location>
</feature>
<feature type="region of interest" description="G3" evidence="2">
    <location>
        <begin position="60"/>
        <end position="63"/>
    </location>
</feature>
<feature type="region of interest" description="G4" evidence="2">
    <location>
        <begin position="122"/>
        <end position="125"/>
    </location>
</feature>
<feature type="region of interest" description="G5" evidence="2">
    <location>
        <begin position="151"/>
        <end position="153"/>
    </location>
</feature>
<feature type="binding site" evidence="1">
    <location>
        <begin position="13"/>
        <end position="20"/>
    </location>
    <ligand>
        <name>GTP</name>
        <dbReference type="ChEBI" id="CHEBI:37565"/>
    </ligand>
</feature>
<feature type="binding site" evidence="1">
    <location>
        <begin position="60"/>
        <end position="64"/>
    </location>
    <ligand>
        <name>GTP</name>
        <dbReference type="ChEBI" id="CHEBI:37565"/>
    </ligand>
</feature>
<feature type="binding site" evidence="1">
    <location>
        <begin position="122"/>
        <end position="125"/>
    </location>
    <ligand>
        <name>GTP</name>
        <dbReference type="ChEBI" id="CHEBI:37565"/>
    </ligand>
</feature>
<reference key="1">
    <citation type="journal article" date="2008" name="J. Bacteriol.">
        <title>Genome sequence of Staphylococcus aureus strain Newman and comparative analysis of staphylococcal genomes: polymorphism and evolution of two major pathogenicity islands.</title>
        <authorList>
            <person name="Baba T."/>
            <person name="Bae T."/>
            <person name="Schneewind O."/>
            <person name="Takeuchi F."/>
            <person name="Hiramatsu K."/>
        </authorList>
    </citation>
    <scope>NUCLEOTIDE SEQUENCE [LARGE SCALE GENOMIC DNA]</scope>
    <source>
        <strain>Newman</strain>
    </source>
</reference>
<proteinExistence type="inferred from homology"/>
<protein>
    <recommendedName>
        <fullName evidence="1">GTPase Era</fullName>
    </recommendedName>
</protein>
<sequence length="299" mass="34329">MTEHKSGFVSIIGRPNVGKSTFVNRVIGHKIAIMSDKAQTTRNKIQGVMTRDDAQIIFIDTPGIHKPKHKLGDYMMKVAKNTLSEIDAIMFMVNANEEIGRGDEYIIEMLKNVKTPVFLVLNKIDLVHPDELMPKIEEYQSYMDFTEIVPISALEGLNVDHFIDVLKTYLPEGPKYYPDDQISDHPEQFVVGEIIREKILHLTSEEIPHAIGVNVDRMVKESEDRVHIEATIYVERDSQKGIVIGKGGKKLKEVGKRARRDIEMLLGSKVYLELWVKVQRDWRNKVNFIRQIGYVEDQD</sequence>
<dbReference type="EMBL" id="AP009351">
    <property type="protein sequence ID" value="BAF67742.1"/>
    <property type="molecule type" value="Genomic_DNA"/>
</dbReference>
<dbReference type="RefSeq" id="WP_000134765.1">
    <property type="nucleotide sequence ID" value="NZ_JBBIAE010000001.1"/>
</dbReference>
<dbReference type="SMR" id="A6QHB0"/>
<dbReference type="KEGG" id="sae:NWMN_1470"/>
<dbReference type="HOGENOM" id="CLU_038009_1_0_9"/>
<dbReference type="Proteomes" id="UP000006386">
    <property type="component" value="Chromosome"/>
</dbReference>
<dbReference type="GO" id="GO:0005829">
    <property type="term" value="C:cytosol"/>
    <property type="evidence" value="ECO:0007669"/>
    <property type="project" value="TreeGrafter"/>
</dbReference>
<dbReference type="GO" id="GO:0005886">
    <property type="term" value="C:plasma membrane"/>
    <property type="evidence" value="ECO:0007669"/>
    <property type="project" value="UniProtKB-SubCell"/>
</dbReference>
<dbReference type="GO" id="GO:0005525">
    <property type="term" value="F:GTP binding"/>
    <property type="evidence" value="ECO:0007669"/>
    <property type="project" value="UniProtKB-UniRule"/>
</dbReference>
<dbReference type="GO" id="GO:0003924">
    <property type="term" value="F:GTPase activity"/>
    <property type="evidence" value="ECO:0007669"/>
    <property type="project" value="UniProtKB-UniRule"/>
</dbReference>
<dbReference type="GO" id="GO:0043024">
    <property type="term" value="F:ribosomal small subunit binding"/>
    <property type="evidence" value="ECO:0007669"/>
    <property type="project" value="TreeGrafter"/>
</dbReference>
<dbReference type="GO" id="GO:0070181">
    <property type="term" value="F:small ribosomal subunit rRNA binding"/>
    <property type="evidence" value="ECO:0007669"/>
    <property type="project" value="UniProtKB-UniRule"/>
</dbReference>
<dbReference type="GO" id="GO:0000028">
    <property type="term" value="P:ribosomal small subunit assembly"/>
    <property type="evidence" value="ECO:0007669"/>
    <property type="project" value="TreeGrafter"/>
</dbReference>
<dbReference type="CDD" id="cd04163">
    <property type="entry name" value="Era"/>
    <property type="match status" value="1"/>
</dbReference>
<dbReference type="CDD" id="cd22534">
    <property type="entry name" value="KH-II_Era"/>
    <property type="match status" value="1"/>
</dbReference>
<dbReference type="FunFam" id="3.30.300.20:FF:000003">
    <property type="entry name" value="GTPase Era"/>
    <property type="match status" value="1"/>
</dbReference>
<dbReference type="FunFam" id="3.40.50.300:FF:000094">
    <property type="entry name" value="GTPase Era"/>
    <property type="match status" value="1"/>
</dbReference>
<dbReference type="Gene3D" id="3.30.300.20">
    <property type="match status" value="1"/>
</dbReference>
<dbReference type="Gene3D" id="3.40.50.300">
    <property type="entry name" value="P-loop containing nucleotide triphosphate hydrolases"/>
    <property type="match status" value="1"/>
</dbReference>
<dbReference type="HAMAP" id="MF_00367">
    <property type="entry name" value="GTPase_Era"/>
    <property type="match status" value="1"/>
</dbReference>
<dbReference type="InterPro" id="IPR030388">
    <property type="entry name" value="G_ERA_dom"/>
</dbReference>
<dbReference type="InterPro" id="IPR006073">
    <property type="entry name" value="GTP-bd"/>
</dbReference>
<dbReference type="InterPro" id="IPR005662">
    <property type="entry name" value="GTPase_Era-like"/>
</dbReference>
<dbReference type="InterPro" id="IPR015946">
    <property type="entry name" value="KH_dom-like_a/b"/>
</dbReference>
<dbReference type="InterPro" id="IPR004044">
    <property type="entry name" value="KH_dom_type_2"/>
</dbReference>
<dbReference type="InterPro" id="IPR009019">
    <property type="entry name" value="KH_sf_prok-type"/>
</dbReference>
<dbReference type="InterPro" id="IPR027417">
    <property type="entry name" value="P-loop_NTPase"/>
</dbReference>
<dbReference type="InterPro" id="IPR005225">
    <property type="entry name" value="Small_GTP-bd"/>
</dbReference>
<dbReference type="NCBIfam" id="TIGR00436">
    <property type="entry name" value="era"/>
    <property type="match status" value="1"/>
</dbReference>
<dbReference type="NCBIfam" id="NF000908">
    <property type="entry name" value="PRK00089.1"/>
    <property type="match status" value="1"/>
</dbReference>
<dbReference type="NCBIfam" id="TIGR00231">
    <property type="entry name" value="small_GTP"/>
    <property type="match status" value="1"/>
</dbReference>
<dbReference type="PANTHER" id="PTHR42698">
    <property type="entry name" value="GTPASE ERA"/>
    <property type="match status" value="1"/>
</dbReference>
<dbReference type="PANTHER" id="PTHR42698:SF1">
    <property type="entry name" value="GTPASE ERA, MITOCHONDRIAL"/>
    <property type="match status" value="1"/>
</dbReference>
<dbReference type="Pfam" id="PF07650">
    <property type="entry name" value="KH_2"/>
    <property type="match status" value="1"/>
</dbReference>
<dbReference type="Pfam" id="PF01926">
    <property type="entry name" value="MMR_HSR1"/>
    <property type="match status" value="1"/>
</dbReference>
<dbReference type="SUPFAM" id="SSF52540">
    <property type="entry name" value="P-loop containing nucleoside triphosphate hydrolases"/>
    <property type="match status" value="1"/>
</dbReference>
<dbReference type="SUPFAM" id="SSF54814">
    <property type="entry name" value="Prokaryotic type KH domain (KH-domain type II)"/>
    <property type="match status" value="1"/>
</dbReference>
<dbReference type="PROSITE" id="PS51713">
    <property type="entry name" value="G_ERA"/>
    <property type="match status" value="1"/>
</dbReference>
<dbReference type="PROSITE" id="PS50823">
    <property type="entry name" value="KH_TYPE_2"/>
    <property type="match status" value="1"/>
</dbReference>